<comment type="catalytic activity">
    <reaction evidence="1">
        <text>urea + 2 H2O + H(+) = hydrogencarbonate + 2 NH4(+)</text>
        <dbReference type="Rhea" id="RHEA:20557"/>
        <dbReference type="ChEBI" id="CHEBI:15377"/>
        <dbReference type="ChEBI" id="CHEBI:15378"/>
        <dbReference type="ChEBI" id="CHEBI:16199"/>
        <dbReference type="ChEBI" id="CHEBI:17544"/>
        <dbReference type="ChEBI" id="CHEBI:28938"/>
        <dbReference type="EC" id="3.5.1.5"/>
    </reaction>
</comment>
<comment type="pathway">
    <text evidence="1">Nitrogen metabolism; urea degradation; CO(2) and NH(3) from urea (urease route): step 1/1.</text>
</comment>
<comment type="subunit">
    <text evidence="1">Heterotrimer of UreA (gamma), UreB (beta) and UreC (alpha) subunits. Three heterotrimers associate to form the active enzyme.</text>
</comment>
<comment type="subcellular location">
    <subcellularLocation>
        <location evidence="1">Cytoplasm</location>
    </subcellularLocation>
</comment>
<comment type="similarity">
    <text evidence="1">Belongs to the urease beta subunit family.</text>
</comment>
<protein>
    <recommendedName>
        <fullName evidence="1">Urease subunit beta</fullName>
        <ecNumber evidence="1">3.5.1.5</ecNumber>
    </recommendedName>
    <alternativeName>
        <fullName evidence="1">Urea amidohydrolase subunit beta</fullName>
    </alternativeName>
</protein>
<sequence>MAPLIPGELLAEPGELELNANREVTTLTVANSGDRPVQVGSHFHFQEANAALIFDRDAARGQRLDIPAGTAIRFEPGDNRDVNLIPFSGARRVVGFNGNINGPLDA</sequence>
<accession>Q0I657</accession>
<organism>
    <name type="scientific">Synechococcus sp. (strain CC9311)</name>
    <dbReference type="NCBI Taxonomy" id="64471"/>
    <lineage>
        <taxon>Bacteria</taxon>
        <taxon>Bacillati</taxon>
        <taxon>Cyanobacteriota</taxon>
        <taxon>Cyanophyceae</taxon>
        <taxon>Synechococcales</taxon>
        <taxon>Synechococcaceae</taxon>
        <taxon>Synechococcus</taxon>
    </lineage>
</organism>
<name>URE2_SYNS3</name>
<evidence type="ECO:0000255" key="1">
    <source>
        <dbReference type="HAMAP-Rule" id="MF_01954"/>
    </source>
</evidence>
<keyword id="KW-0963">Cytoplasm</keyword>
<keyword id="KW-0378">Hydrolase</keyword>
<keyword id="KW-1185">Reference proteome</keyword>
<dbReference type="EC" id="3.5.1.5" evidence="1"/>
<dbReference type="EMBL" id="CP000435">
    <property type="protein sequence ID" value="ABI46148.1"/>
    <property type="molecule type" value="Genomic_DNA"/>
</dbReference>
<dbReference type="RefSeq" id="WP_011620765.1">
    <property type="nucleotide sequence ID" value="NC_008319.1"/>
</dbReference>
<dbReference type="SMR" id="Q0I657"/>
<dbReference type="STRING" id="64471.sync_2878"/>
<dbReference type="KEGG" id="syg:sync_2878"/>
<dbReference type="eggNOG" id="COG0832">
    <property type="taxonomic scope" value="Bacteria"/>
</dbReference>
<dbReference type="HOGENOM" id="CLU_129707_1_1_3"/>
<dbReference type="OrthoDB" id="9797217at2"/>
<dbReference type="UniPathway" id="UPA00258">
    <property type="reaction ID" value="UER00370"/>
</dbReference>
<dbReference type="Proteomes" id="UP000001961">
    <property type="component" value="Chromosome"/>
</dbReference>
<dbReference type="GO" id="GO:0035550">
    <property type="term" value="C:urease complex"/>
    <property type="evidence" value="ECO:0007669"/>
    <property type="project" value="InterPro"/>
</dbReference>
<dbReference type="GO" id="GO:0009039">
    <property type="term" value="F:urease activity"/>
    <property type="evidence" value="ECO:0007669"/>
    <property type="project" value="UniProtKB-UniRule"/>
</dbReference>
<dbReference type="GO" id="GO:0043419">
    <property type="term" value="P:urea catabolic process"/>
    <property type="evidence" value="ECO:0007669"/>
    <property type="project" value="UniProtKB-UniRule"/>
</dbReference>
<dbReference type="CDD" id="cd00407">
    <property type="entry name" value="Urease_beta"/>
    <property type="match status" value="1"/>
</dbReference>
<dbReference type="FunFam" id="2.10.150.10:FF:000001">
    <property type="entry name" value="Urease subunit beta"/>
    <property type="match status" value="1"/>
</dbReference>
<dbReference type="Gene3D" id="2.10.150.10">
    <property type="entry name" value="Urease, beta subunit"/>
    <property type="match status" value="1"/>
</dbReference>
<dbReference type="HAMAP" id="MF_01954">
    <property type="entry name" value="Urease_beta"/>
    <property type="match status" value="1"/>
</dbReference>
<dbReference type="InterPro" id="IPR002019">
    <property type="entry name" value="Urease_beta-like"/>
</dbReference>
<dbReference type="InterPro" id="IPR036461">
    <property type="entry name" value="Urease_betasu_sf"/>
</dbReference>
<dbReference type="InterPro" id="IPR050069">
    <property type="entry name" value="Urease_subunit"/>
</dbReference>
<dbReference type="NCBIfam" id="NF009682">
    <property type="entry name" value="PRK13203.1"/>
    <property type="match status" value="1"/>
</dbReference>
<dbReference type="NCBIfam" id="TIGR00192">
    <property type="entry name" value="urease_beta"/>
    <property type="match status" value="1"/>
</dbReference>
<dbReference type="PANTHER" id="PTHR33569">
    <property type="entry name" value="UREASE"/>
    <property type="match status" value="1"/>
</dbReference>
<dbReference type="PANTHER" id="PTHR33569:SF1">
    <property type="entry name" value="UREASE"/>
    <property type="match status" value="1"/>
</dbReference>
<dbReference type="Pfam" id="PF00699">
    <property type="entry name" value="Urease_beta"/>
    <property type="match status" value="1"/>
</dbReference>
<dbReference type="SUPFAM" id="SSF51278">
    <property type="entry name" value="Urease, beta-subunit"/>
    <property type="match status" value="1"/>
</dbReference>
<proteinExistence type="inferred from homology"/>
<reference key="1">
    <citation type="journal article" date="2006" name="Proc. Natl. Acad. Sci. U.S.A.">
        <title>Genome sequence of Synechococcus CC9311: insights into adaptation to a coastal environment.</title>
        <authorList>
            <person name="Palenik B."/>
            <person name="Ren Q."/>
            <person name="Dupont C.L."/>
            <person name="Myers G.S."/>
            <person name="Heidelberg J.F."/>
            <person name="Badger J.H."/>
            <person name="Madupu R."/>
            <person name="Nelson W.C."/>
            <person name="Brinkac L.M."/>
            <person name="Dodson R.J."/>
            <person name="Durkin A.S."/>
            <person name="Daugherty S.C."/>
            <person name="Sullivan S.A."/>
            <person name="Khouri H."/>
            <person name="Mohamoud Y."/>
            <person name="Halpin R."/>
            <person name="Paulsen I.T."/>
        </authorList>
    </citation>
    <scope>NUCLEOTIDE SEQUENCE [LARGE SCALE GENOMIC DNA]</scope>
    <source>
        <strain>CC9311</strain>
    </source>
</reference>
<feature type="chain" id="PRO_1000070780" description="Urease subunit beta">
    <location>
        <begin position="1"/>
        <end position="106"/>
    </location>
</feature>
<gene>
    <name evidence="1" type="primary">ureB</name>
    <name type="ordered locus">sync_2878</name>
</gene>